<gene>
    <name evidence="1" type="primary">mnmA2</name>
    <name type="ordered locus">BF1343</name>
</gene>
<keyword id="KW-0067">ATP-binding</keyword>
<keyword id="KW-0963">Cytoplasm</keyword>
<keyword id="KW-1015">Disulfide bond</keyword>
<keyword id="KW-0547">Nucleotide-binding</keyword>
<keyword id="KW-0694">RNA-binding</keyword>
<keyword id="KW-0808">Transferase</keyword>
<keyword id="KW-0819">tRNA processing</keyword>
<keyword id="KW-0820">tRNA-binding</keyword>
<accession>Q5LFN5</accession>
<evidence type="ECO:0000255" key="1">
    <source>
        <dbReference type="HAMAP-Rule" id="MF_00144"/>
    </source>
</evidence>
<dbReference type="EC" id="2.8.1.13" evidence="1"/>
<dbReference type="EMBL" id="CR626927">
    <property type="protein sequence ID" value="CAH07058.1"/>
    <property type="molecule type" value="Genomic_DNA"/>
</dbReference>
<dbReference type="SMR" id="Q5LFN5"/>
<dbReference type="PaxDb" id="272559-BF9343_1277"/>
<dbReference type="KEGG" id="bfs:BF9343_1277"/>
<dbReference type="eggNOG" id="COG0482">
    <property type="taxonomic scope" value="Bacteria"/>
</dbReference>
<dbReference type="HOGENOM" id="CLU_035188_1_0_10"/>
<dbReference type="Proteomes" id="UP000006731">
    <property type="component" value="Chromosome"/>
</dbReference>
<dbReference type="GO" id="GO:0005737">
    <property type="term" value="C:cytoplasm"/>
    <property type="evidence" value="ECO:0007669"/>
    <property type="project" value="UniProtKB-SubCell"/>
</dbReference>
<dbReference type="GO" id="GO:0005524">
    <property type="term" value="F:ATP binding"/>
    <property type="evidence" value="ECO:0007669"/>
    <property type="project" value="UniProtKB-KW"/>
</dbReference>
<dbReference type="GO" id="GO:0000049">
    <property type="term" value="F:tRNA binding"/>
    <property type="evidence" value="ECO:0007669"/>
    <property type="project" value="UniProtKB-KW"/>
</dbReference>
<dbReference type="GO" id="GO:0103016">
    <property type="term" value="F:tRNA-uridine 2-sulfurtransferase activity"/>
    <property type="evidence" value="ECO:0007669"/>
    <property type="project" value="UniProtKB-EC"/>
</dbReference>
<dbReference type="GO" id="GO:0006400">
    <property type="term" value="P:tRNA modification"/>
    <property type="evidence" value="ECO:0007669"/>
    <property type="project" value="UniProtKB-UniRule"/>
</dbReference>
<dbReference type="CDD" id="cd01998">
    <property type="entry name" value="MnmA_TRMU-like"/>
    <property type="match status" value="1"/>
</dbReference>
<dbReference type="FunFam" id="2.30.30.280:FF:000001">
    <property type="entry name" value="tRNA-specific 2-thiouridylase MnmA"/>
    <property type="match status" value="1"/>
</dbReference>
<dbReference type="Gene3D" id="2.30.30.280">
    <property type="entry name" value="Adenine nucleotide alpha hydrolases-like domains"/>
    <property type="match status" value="1"/>
</dbReference>
<dbReference type="Gene3D" id="3.40.50.620">
    <property type="entry name" value="HUPs"/>
    <property type="match status" value="1"/>
</dbReference>
<dbReference type="Gene3D" id="2.40.30.10">
    <property type="entry name" value="Translation factors"/>
    <property type="match status" value="1"/>
</dbReference>
<dbReference type="HAMAP" id="MF_00144">
    <property type="entry name" value="tRNA_thiouridyl_MnmA"/>
    <property type="match status" value="1"/>
</dbReference>
<dbReference type="InterPro" id="IPR004506">
    <property type="entry name" value="MnmA-like"/>
</dbReference>
<dbReference type="InterPro" id="IPR046885">
    <property type="entry name" value="MnmA-like_C"/>
</dbReference>
<dbReference type="InterPro" id="IPR046884">
    <property type="entry name" value="MnmA-like_central"/>
</dbReference>
<dbReference type="InterPro" id="IPR023382">
    <property type="entry name" value="MnmA-like_central_sf"/>
</dbReference>
<dbReference type="InterPro" id="IPR014729">
    <property type="entry name" value="Rossmann-like_a/b/a_fold"/>
</dbReference>
<dbReference type="InterPro" id="IPR051305">
    <property type="entry name" value="tRNA_2-thiouridylase_MnmA"/>
</dbReference>
<dbReference type="NCBIfam" id="NF001138">
    <property type="entry name" value="PRK00143.1"/>
    <property type="match status" value="1"/>
</dbReference>
<dbReference type="NCBIfam" id="TIGR00420">
    <property type="entry name" value="trmU"/>
    <property type="match status" value="1"/>
</dbReference>
<dbReference type="PANTHER" id="PTHR43052">
    <property type="match status" value="1"/>
</dbReference>
<dbReference type="PANTHER" id="PTHR43052:SF1">
    <property type="entry name" value="TRNA-5-TAURINOMETHYLURIDINE 2-SULFURTRANSFERASE"/>
    <property type="match status" value="1"/>
</dbReference>
<dbReference type="Pfam" id="PF03054">
    <property type="entry name" value="tRNA_Me_trans"/>
    <property type="match status" value="1"/>
</dbReference>
<dbReference type="Pfam" id="PF20258">
    <property type="entry name" value="tRNA_Me_trans_C"/>
    <property type="match status" value="1"/>
</dbReference>
<dbReference type="Pfam" id="PF20259">
    <property type="entry name" value="tRNA_Me_trans_M"/>
    <property type="match status" value="1"/>
</dbReference>
<dbReference type="SUPFAM" id="SSF52402">
    <property type="entry name" value="Adenine nucleotide alpha hydrolases-like"/>
    <property type="match status" value="1"/>
</dbReference>
<sequence length="353" mass="39629">MDIAALLSGGVDSSVVVHLLCEQGYKPTLFYIKIGMDGAEYMDCSAEEDIELSTAIARRYGLALEVVDLHREYWDNVAAYAIEKIRKGQTPNPDVMCNKLIKFGCFEQQVGKDFDLTATGHYATTLQLGGKTWLGTAKDPIKDQTDFLAQIDYLQVSKLLFPIGGLMKHEVREIALQAGLPSARRKDSQGICFLGKINYNDFVRRFLGEKEGAVIEFETGKKIGTHRGYWFHTIGQRKGLGLGGGPWFVVKKDIQDNIIYVSHGYDAEQQYGYEFRMKDFNFITDNPWEGSTGEEEVTFKIRHTPEFIKGRLLHDEEGYRIISSEKLQGIAPGQFGVIYDAESRVCFGSGEIG</sequence>
<organism>
    <name type="scientific">Bacteroides fragilis (strain ATCC 25285 / DSM 2151 / CCUG 4856 / JCM 11019 / LMG 10263 / NCTC 9343 / Onslow / VPI 2553 / EN-2)</name>
    <dbReference type="NCBI Taxonomy" id="272559"/>
    <lineage>
        <taxon>Bacteria</taxon>
        <taxon>Pseudomonadati</taxon>
        <taxon>Bacteroidota</taxon>
        <taxon>Bacteroidia</taxon>
        <taxon>Bacteroidales</taxon>
        <taxon>Bacteroidaceae</taxon>
        <taxon>Bacteroides</taxon>
    </lineage>
</organism>
<feature type="chain" id="PRO_0000349525" description="tRNA-specific 2-thiouridylase MnmA 2">
    <location>
        <begin position="1"/>
        <end position="353"/>
    </location>
</feature>
<feature type="region of interest" description="Interaction with target base in tRNA" evidence="1">
    <location>
        <begin position="92"/>
        <end position="94"/>
    </location>
</feature>
<feature type="region of interest" description="Interaction with tRNA" evidence="1">
    <location>
        <begin position="142"/>
        <end position="144"/>
    </location>
</feature>
<feature type="active site" description="Nucleophile" evidence="1">
    <location>
        <position position="97"/>
    </location>
</feature>
<feature type="active site" description="Cysteine persulfide intermediate" evidence="1">
    <location>
        <position position="192"/>
    </location>
</feature>
<feature type="binding site" evidence="1">
    <location>
        <begin position="6"/>
        <end position="13"/>
    </location>
    <ligand>
        <name>ATP</name>
        <dbReference type="ChEBI" id="CHEBI:30616"/>
    </ligand>
</feature>
<feature type="binding site" evidence="1">
    <location>
        <position position="120"/>
    </location>
    <ligand>
        <name>ATP</name>
        <dbReference type="ChEBI" id="CHEBI:30616"/>
    </ligand>
</feature>
<feature type="site" description="Interaction with tRNA" evidence="1">
    <location>
        <position position="121"/>
    </location>
</feature>
<feature type="site" description="Interaction with tRNA" evidence="1">
    <location>
        <position position="334"/>
    </location>
</feature>
<feature type="disulfide bond" description="Alternate" evidence="1">
    <location>
        <begin position="97"/>
        <end position="192"/>
    </location>
</feature>
<proteinExistence type="inferred from homology"/>
<name>MNMA2_BACFN</name>
<reference key="1">
    <citation type="journal article" date="2005" name="Science">
        <title>Extensive DNA inversions in the B. fragilis genome control variable gene expression.</title>
        <authorList>
            <person name="Cerdeno-Tarraga A.-M."/>
            <person name="Patrick S."/>
            <person name="Crossman L.C."/>
            <person name="Blakely G."/>
            <person name="Abratt V."/>
            <person name="Lennard N."/>
            <person name="Poxton I."/>
            <person name="Duerden B."/>
            <person name="Harris B."/>
            <person name="Quail M.A."/>
            <person name="Barron A."/>
            <person name="Clark L."/>
            <person name="Corton C."/>
            <person name="Doggett J."/>
            <person name="Holden M.T.G."/>
            <person name="Larke N."/>
            <person name="Line A."/>
            <person name="Lord A."/>
            <person name="Norbertczak H."/>
            <person name="Ormond D."/>
            <person name="Price C."/>
            <person name="Rabbinowitsch E."/>
            <person name="Woodward J."/>
            <person name="Barrell B.G."/>
            <person name="Parkhill J."/>
        </authorList>
    </citation>
    <scope>NUCLEOTIDE SEQUENCE [LARGE SCALE GENOMIC DNA]</scope>
    <source>
        <strain>ATCC 25285 / DSM 2151 / CCUG 4856 / JCM 11019 / LMG 10263 / NCTC 9343 / Onslow / VPI 2553 / EN-2</strain>
    </source>
</reference>
<protein>
    <recommendedName>
        <fullName evidence="1">tRNA-specific 2-thiouridylase MnmA 2</fullName>
        <ecNumber evidence="1">2.8.1.13</ecNumber>
    </recommendedName>
</protein>
<comment type="function">
    <text evidence="1">Catalyzes the 2-thiolation of uridine at the wobble position (U34) of tRNA, leading to the formation of s(2)U34.</text>
</comment>
<comment type="catalytic activity">
    <reaction evidence="1">
        <text>S-sulfanyl-L-cysteinyl-[protein] + uridine(34) in tRNA + AH2 + ATP = 2-thiouridine(34) in tRNA + L-cysteinyl-[protein] + A + AMP + diphosphate + H(+)</text>
        <dbReference type="Rhea" id="RHEA:47032"/>
        <dbReference type="Rhea" id="RHEA-COMP:10131"/>
        <dbReference type="Rhea" id="RHEA-COMP:11726"/>
        <dbReference type="Rhea" id="RHEA-COMP:11727"/>
        <dbReference type="Rhea" id="RHEA-COMP:11728"/>
        <dbReference type="ChEBI" id="CHEBI:13193"/>
        <dbReference type="ChEBI" id="CHEBI:15378"/>
        <dbReference type="ChEBI" id="CHEBI:17499"/>
        <dbReference type="ChEBI" id="CHEBI:29950"/>
        <dbReference type="ChEBI" id="CHEBI:30616"/>
        <dbReference type="ChEBI" id="CHEBI:33019"/>
        <dbReference type="ChEBI" id="CHEBI:61963"/>
        <dbReference type="ChEBI" id="CHEBI:65315"/>
        <dbReference type="ChEBI" id="CHEBI:87170"/>
        <dbReference type="ChEBI" id="CHEBI:456215"/>
        <dbReference type="EC" id="2.8.1.13"/>
    </reaction>
</comment>
<comment type="subcellular location">
    <subcellularLocation>
        <location evidence="1">Cytoplasm</location>
    </subcellularLocation>
</comment>
<comment type="similarity">
    <text evidence="1">Belongs to the MnmA/TRMU family.</text>
</comment>